<geneLocation type="mitochondrion"/>
<comment type="function">
    <text evidence="3">Component of the ubiquinol-cytochrome c reductase complex (complex III or cytochrome b-c1 complex) that is part of the mitochondrial respiratory chain. The b-c1 complex mediates electron transfer from ubiquinol to cytochrome c. Contributes to the generation of a proton gradient across the mitochondrial membrane that is then used for ATP synthesis.</text>
</comment>
<comment type="cofactor">
    <cofactor evidence="3">
        <name>heme b</name>
        <dbReference type="ChEBI" id="CHEBI:60344"/>
    </cofactor>
    <text evidence="3">Binds 2 heme b groups non-covalently.</text>
</comment>
<comment type="subunit">
    <text evidence="1">The main subunits of complex b-c1 are: cytochrome b, cytochrome c1 and the Rieske protein.</text>
</comment>
<comment type="subcellular location">
    <subcellularLocation>
        <location evidence="3">Mitochondrion inner membrane</location>
        <topology evidence="3">Multi-pass membrane protein</topology>
    </subcellularLocation>
</comment>
<comment type="miscellaneous">
    <text evidence="1">Heme 1 (or BL or b562) is low-potential and absorbs at about 562 nm, and heme 2 (or BH or b566) is high-potential and absorbs at about 566 nm.</text>
</comment>
<comment type="similarity">
    <text evidence="4 5">Belongs to the cytochrome b family.</text>
</comment>
<comment type="caution">
    <text evidence="3">The protein contains only eight transmembrane helices, not nine as predicted by bioinformatics tools.</text>
</comment>
<reference key="1">
    <citation type="journal article" date="1995" name="J. Mol. Biol.">
        <title>The mitochondrial DNA of the amoeboid protozoon, Acanthamoeba castellanii: complete sequence, gene content and genome organization.</title>
        <authorList>
            <person name="Burger G."/>
            <person name="Plante I."/>
            <person name="Lonergan K.M."/>
            <person name="Gray M.W."/>
        </authorList>
    </citation>
    <scope>NUCLEOTIDE SEQUENCE [GENOMIC DNA]</scope>
    <source>
        <strain>ATCC 30010 / Neff</strain>
    </source>
</reference>
<keyword id="KW-0249">Electron transport</keyword>
<keyword id="KW-0349">Heme</keyword>
<keyword id="KW-0408">Iron</keyword>
<keyword id="KW-0472">Membrane</keyword>
<keyword id="KW-0479">Metal-binding</keyword>
<keyword id="KW-0496">Mitochondrion</keyword>
<keyword id="KW-0999">Mitochondrion inner membrane</keyword>
<keyword id="KW-0679">Respiratory chain</keyword>
<keyword id="KW-0812">Transmembrane</keyword>
<keyword id="KW-1133">Transmembrane helix</keyword>
<keyword id="KW-0813">Transport</keyword>
<keyword id="KW-0830">Ubiquinone</keyword>
<proteinExistence type="inferred from homology"/>
<protein>
    <recommendedName>
        <fullName>Cytochrome b</fullName>
    </recommendedName>
    <alternativeName>
        <fullName>Complex III subunit 3</fullName>
    </alternativeName>
    <alternativeName>
        <fullName>Complex III subunit III</fullName>
    </alternativeName>
    <alternativeName>
        <fullName>Cytochrome b-c1 complex subunit 3</fullName>
    </alternativeName>
    <alternativeName>
        <fullName>Ubiquinol-cytochrome-c reductase complex cytochrome b subunit</fullName>
    </alternativeName>
</protein>
<gene>
    <name type="primary">MT-CYB</name>
    <name type="synonym">COB</name>
    <name type="synonym">CYTB</name>
    <name type="synonym">MTCYB</name>
</gene>
<feature type="chain" id="PRO_0000060522" description="Cytochrome b">
    <location>
        <begin position="1"/>
        <end position="385"/>
    </location>
</feature>
<feature type="transmembrane region" description="Helical" evidence="3">
    <location>
        <begin position="32"/>
        <end position="52"/>
    </location>
</feature>
<feature type="transmembrane region" description="Helical" evidence="3">
    <location>
        <begin position="76"/>
        <end position="98"/>
    </location>
</feature>
<feature type="transmembrane region" description="Helical" evidence="3">
    <location>
        <begin position="113"/>
        <end position="133"/>
    </location>
</feature>
<feature type="transmembrane region" description="Helical" evidence="3">
    <location>
        <begin position="179"/>
        <end position="199"/>
    </location>
</feature>
<feature type="transmembrane region" description="Helical" evidence="3">
    <location>
        <begin position="226"/>
        <end position="246"/>
    </location>
</feature>
<feature type="transmembrane region" description="Helical" evidence="3">
    <location>
        <begin position="290"/>
        <end position="310"/>
    </location>
</feature>
<feature type="transmembrane region" description="Helical" evidence="3">
    <location>
        <begin position="322"/>
        <end position="342"/>
    </location>
</feature>
<feature type="transmembrane region" description="Helical" evidence="3">
    <location>
        <begin position="349"/>
        <end position="369"/>
    </location>
</feature>
<feature type="binding site" description="axial binding residue" evidence="3">
    <location>
        <position position="82"/>
    </location>
    <ligand>
        <name>heme b</name>
        <dbReference type="ChEBI" id="CHEBI:60344"/>
        <label>b562</label>
    </ligand>
    <ligandPart>
        <name>Fe</name>
        <dbReference type="ChEBI" id="CHEBI:18248"/>
    </ligandPart>
</feature>
<feature type="binding site" description="axial binding residue" evidence="3">
    <location>
        <position position="96"/>
    </location>
    <ligand>
        <name>heme b</name>
        <dbReference type="ChEBI" id="CHEBI:60344"/>
        <label>b566</label>
    </ligand>
    <ligandPart>
        <name>Fe</name>
        <dbReference type="ChEBI" id="CHEBI:18248"/>
    </ligandPart>
</feature>
<feature type="binding site" description="axial binding residue" evidence="3">
    <location>
        <position position="183"/>
    </location>
    <ligand>
        <name>heme b</name>
        <dbReference type="ChEBI" id="CHEBI:60344"/>
        <label>b562</label>
    </ligand>
    <ligandPart>
        <name>Fe</name>
        <dbReference type="ChEBI" id="CHEBI:18248"/>
    </ligandPart>
</feature>
<feature type="binding site" description="axial binding residue" evidence="3">
    <location>
        <position position="197"/>
    </location>
    <ligand>
        <name>heme b</name>
        <dbReference type="ChEBI" id="CHEBI:60344"/>
        <label>b566</label>
    </ligand>
    <ligandPart>
        <name>Fe</name>
        <dbReference type="ChEBI" id="CHEBI:18248"/>
    </ligandPart>
</feature>
<feature type="binding site" evidence="2">
    <location>
        <position position="202"/>
    </location>
    <ligand>
        <name>a ubiquinone</name>
        <dbReference type="ChEBI" id="CHEBI:16389"/>
    </ligand>
</feature>
<name>CYB_ACACA</name>
<sequence length="385" mass="43934">MRFIKKYPLLNIVNSFLIDYPAPPNISYLWNFGALAAFCLGIQIVTGIFLAMFYVPSIESAFSSVQYIMRDVNYGWLIRYIHANGASFFFICVYIHVFRGLYYNSYITPRELLWNLGVTILIVMILTAFLGYVLPWGQMSFWAATVITSLFSAIPVVGEYIVIWLWGGFSVDNATLNRFFSLHYLLPFVIALLSLIHVAVLHESGSSNPLNIALSVANKVPFHPYFIFKDLLGIIFFLIVFCYAVFFKPDSIIDPINNVPANPLVTPTHIVPEWYFLPFYAILRSIPNKLGGVITLGLALIVLFLLPFITNNVFKGSFFEISKTILFWSFFSVCVLLGWIGFKPIEDPYLMLGQMLTVLYFFYFFSLAVIVPTLQAYTFKNVFAK</sequence>
<dbReference type="EMBL" id="U12386">
    <property type="protein sequence ID" value="AAD11830.1"/>
    <property type="molecule type" value="Genomic_DNA"/>
</dbReference>
<dbReference type="PIR" id="S53838">
    <property type="entry name" value="S53838"/>
</dbReference>
<dbReference type="RefSeq" id="NP_042537.1">
    <property type="nucleotide sequence ID" value="NC_001637.1"/>
</dbReference>
<dbReference type="SMR" id="Q37378"/>
<dbReference type="GeneID" id="1734035"/>
<dbReference type="GO" id="GO:0005743">
    <property type="term" value="C:mitochondrial inner membrane"/>
    <property type="evidence" value="ECO:0007669"/>
    <property type="project" value="UniProtKB-SubCell"/>
</dbReference>
<dbReference type="GO" id="GO:0045275">
    <property type="term" value="C:respiratory chain complex III"/>
    <property type="evidence" value="ECO:0007669"/>
    <property type="project" value="InterPro"/>
</dbReference>
<dbReference type="GO" id="GO:0046872">
    <property type="term" value="F:metal ion binding"/>
    <property type="evidence" value="ECO:0007669"/>
    <property type="project" value="UniProtKB-KW"/>
</dbReference>
<dbReference type="GO" id="GO:0008121">
    <property type="term" value="F:ubiquinol-cytochrome-c reductase activity"/>
    <property type="evidence" value="ECO:0007669"/>
    <property type="project" value="InterPro"/>
</dbReference>
<dbReference type="GO" id="GO:0006122">
    <property type="term" value="P:mitochondrial electron transport, ubiquinol to cytochrome c"/>
    <property type="evidence" value="ECO:0007669"/>
    <property type="project" value="TreeGrafter"/>
</dbReference>
<dbReference type="CDD" id="cd00290">
    <property type="entry name" value="cytochrome_b_C"/>
    <property type="match status" value="1"/>
</dbReference>
<dbReference type="CDD" id="cd00284">
    <property type="entry name" value="Cytochrome_b_N"/>
    <property type="match status" value="1"/>
</dbReference>
<dbReference type="Gene3D" id="1.20.810.10">
    <property type="entry name" value="Cytochrome Bc1 Complex, Chain C"/>
    <property type="match status" value="1"/>
</dbReference>
<dbReference type="InterPro" id="IPR005798">
    <property type="entry name" value="Cyt_b/b6_C"/>
</dbReference>
<dbReference type="InterPro" id="IPR036150">
    <property type="entry name" value="Cyt_b/b6_C_sf"/>
</dbReference>
<dbReference type="InterPro" id="IPR005797">
    <property type="entry name" value="Cyt_b/b6_N"/>
</dbReference>
<dbReference type="InterPro" id="IPR027387">
    <property type="entry name" value="Cytb/b6-like_sf"/>
</dbReference>
<dbReference type="InterPro" id="IPR030689">
    <property type="entry name" value="Cytochrome_b"/>
</dbReference>
<dbReference type="InterPro" id="IPR048260">
    <property type="entry name" value="Cytochrome_b_C_euk/bac"/>
</dbReference>
<dbReference type="InterPro" id="IPR048259">
    <property type="entry name" value="Cytochrome_b_N_euk/bac"/>
</dbReference>
<dbReference type="InterPro" id="IPR016174">
    <property type="entry name" value="Di-haem_cyt_TM"/>
</dbReference>
<dbReference type="PANTHER" id="PTHR19271">
    <property type="entry name" value="CYTOCHROME B"/>
    <property type="match status" value="1"/>
</dbReference>
<dbReference type="PANTHER" id="PTHR19271:SF16">
    <property type="entry name" value="CYTOCHROME B"/>
    <property type="match status" value="1"/>
</dbReference>
<dbReference type="Pfam" id="PF00032">
    <property type="entry name" value="Cytochrom_B_C"/>
    <property type="match status" value="1"/>
</dbReference>
<dbReference type="Pfam" id="PF00033">
    <property type="entry name" value="Cytochrome_B"/>
    <property type="match status" value="1"/>
</dbReference>
<dbReference type="PIRSF" id="PIRSF038885">
    <property type="entry name" value="COB"/>
    <property type="match status" value="1"/>
</dbReference>
<dbReference type="SUPFAM" id="SSF81648">
    <property type="entry name" value="a domain/subunit of cytochrome bc1 complex (Ubiquinol-cytochrome c reductase)"/>
    <property type="match status" value="1"/>
</dbReference>
<dbReference type="SUPFAM" id="SSF81342">
    <property type="entry name" value="Transmembrane di-heme cytochromes"/>
    <property type="match status" value="1"/>
</dbReference>
<dbReference type="PROSITE" id="PS51003">
    <property type="entry name" value="CYTB_CTER"/>
    <property type="match status" value="1"/>
</dbReference>
<dbReference type="PROSITE" id="PS51002">
    <property type="entry name" value="CYTB_NTER"/>
    <property type="match status" value="1"/>
</dbReference>
<organism>
    <name type="scientific">Acanthamoeba castellanii</name>
    <name type="common">Amoeba</name>
    <dbReference type="NCBI Taxonomy" id="5755"/>
    <lineage>
        <taxon>Eukaryota</taxon>
        <taxon>Amoebozoa</taxon>
        <taxon>Discosea</taxon>
        <taxon>Longamoebia</taxon>
        <taxon>Centramoebida</taxon>
        <taxon>Acanthamoebidae</taxon>
        <taxon>Acanthamoeba</taxon>
    </lineage>
</organism>
<accession>Q37378</accession>
<evidence type="ECO:0000250" key="1"/>
<evidence type="ECO:0000250" key="2">
    <source>
        <dbReference type="UniProtKB" id="P00157"/>
    </source>
</evidence>
<evidence type="ECO:0000250" key="3">
    <source>
        <dbReference type="UniProtKB" id="P00163"/>
    </source>
</evidence>
<evidence type="ECO:0000255" key="4">
    <source>
        <dbReference type="PROSITE-ProRule" id="PRU00967"/>
    </source>
</evidence>
<evidence type="ECO:0000255" key="5">
    <source>
        <dbReference type="PROSITE-ProRule" id="PRU00968"/>
    </source>
</evidence>